<sequence>MFAQLDTKTVYSFMDSLIDLNHYFERAKQFGYHTIGIMDKDNLYGAYHFIKGCQKNGLQPVLGLEVEILYQERQVLLNLIAQNTQGYHQLLKISTAKMSGKLHMDYLCQHLEGIAVIIPSKGWSDTLVVPFDYYIGVDQYTDLSHMDSKRQLIPLRTVRYFAQDDMETLHMLHAIRDNLSLAETPVVESDQELADCQQLTTFYQTHCPQALQNLEDLVSGIYYDFDTNLKLPHFNRDKSAKQELQELTEAGLKEKGLWKEPYQSRLLHELIIISDMGFDDYFLIVWDLLRFGRSKGYYMGMGRGSAAGSLVAYALNITGIDPVQHDLLFERFLNKERYSMPDIDIDLPDIYRSEFLRYVRNRYGSDHSAQIVTFSTFGPKQAIRDVFKRFGVPEYELTNLTKKIGFKDSLATVYEKSISFRQVINSRTEFQKAFAIAKRIEGNPRQTSIHAAGIVMSDDTLTNHIPLKSGDDMMITQYDAHAVEANGLLKMDFLGLRNLTFVQKMQEKVAKDYGCQIDIAAIDLEDPQTLALFAKGDTKGIFQFEQNGAINLLKRIKPQRFEEIVATTSLNRPGASDYTTNFIKRREGQEKIDLIDPVIAPILEPTYGIMLYQEQVMQIAQVYAGFTLGKADLLRRAMSKKNLQEMQKMEEDFIASAKHLGRAEETARGLFKRMEKFAGYGFNRSHAFAYSALAFQLAYFKAHYPAVFYDIMMNYSSSDYITDALESDFQVAQVTINSIPYTDKIEASKIYMGLKNIKGLPRDFAYWIIEQRPFNSVEDFLTRTPEKYQKKVFLEPLIKIGLFDCFEPNRKKILDNLDGLLVFVNELGSLFSDSSFSWVDTQDYSATEKYSLEQEVVGVGMSKHPLIDIAEKSIQTFTPISQLVKESEAVVLIQIDSIRIIRTKTSGQQMAFLSVNDTKKKLDVTLFPQEYAIYKDQLKEGEFYYLKGRIKERDHRLQMVCQQVQMAISQKYWLLVENHQFDSQISEILGAFPGTTPVVIHYQKNKETIALTKIQVHVTENLKEKLRPFVLKTVFR</sequence>
<name>DPO3A_STRP6</name>
<accession>Q5XBV1</accession>
<feature type="chain" id="PRO_0000103352" description="DNA polymerase III subunit alpha">
    <location>
        <begin position="1"/>
        <end position="1036"/>
    </location>
</feature>
<dbReference type="EC" id="2.7.7.7"/>
<dbReference type="EMBL" id="CP000003">
    <property type="protein sequence ID" value="AAT87112.1"/>
    <property type="molecule type" value="Genomic_DNA"/>
</dbReference>
<dbReference type="RefSeq" id="WP_011184574.1">
    <property type="nucleotide sequence ID" value="NC_006086.1"/>
</dbReference>
<dbReference type="SMR" id="Q5XBV1"/>
<dbReference type="KEGG" id="spa:M6_Spy0977"/>
<dbReference type="HOGENOM" id="CLU_001600_0_0_9"/>
<dbReference type="Proteomes" id="UP000001167">
    <property type="component" value="Chromosome"/>
</dbReference>
<dbReference type="GO" id="GO:0005737">
    <property type="term" value="C:cytoplasm"/>
    <property type="evidence" value="ECO:0007669"/>
    <property type="project" value="UniProtKB-SubCell"/>
</dbReference>
<dbReference type="GO" id="GO:0008408">
    <property type="term" value="F:3'-5' exonuclease activity"/>
    <property type="evidence" value="ECO:0007669"/>
    <property type="project" value="InterPro"/>
</dbReference>
<dbReference type="GO" id="GO:0003887">
    <property type="term" value="F:DNA-directed DNA polymerase activity"/>
    <property type="evidence" value="ECO:0007669"/>
    <property type="project" value="UniProtKB-KW"/>
</dbReference>
<dbReference type="GO" id="GO:0003676">
    <property type="term" value="F:nucleic acid binding"/>
    <property type="evidence" value="ECO:0007669"/>
    <property type="project" value="InterPro"/>
</dbReference>
<dbReference type="GO" id="GO:0006260">
    <property type="term" value="P:DNA replication"/>
    <property type="evidence" value="ECO:0007669"/>
    <property type="project" value="UniProtKB-KW"/>
</dbReference>
<dbReference type="CDD" id="cd04485">
    <property type="entry name" value="DnaE_OBF"/>
    <property type="match status" value="1"/>
</dbReference>
<dbReference type="CDD" id="cd07431">
    <property type="entry name" value="PHP_PolIIIA"/>
    <property type="match status" value="1"/>
</dbReference>
<dbReference type="Gene3D" id="1.10.150.870">
    <property type="match status" value="1"/>
</dbReference>
<dbReference type="Gene3D" id="1.10.10.1600">
    <property type="entry name" value="Bacterial DNA polymerase III alpha subunit, thumb domain"/>
    <property type="match status" value="1"/>
</dbReference>
<dbReference type="Gene3D" id="3.20.20.140">
    <property type="entry name" value="Metal-dependent hydrolases"/>
    <property type="match status" value="1"/>
</dbReference>
<dbReference type="Gene3D" id="2.40.50.140">
    <property type="entry name" value="Nucleic acid-binding proteins"/>
    <property type="match status" value="1"/>
</dbReference>
<dbReference type="InterPro" id="IPR011708">
    <property type="entry name" value="DNA_pol3_alpha_NTPase_dom"/>
</dbReference>
<dbReference type="InterPro" id="IPR041931">
    <property type="entry name" value="DNA_pol3_alpha_thumb_dom"/>
</dbReference>
<dbReference type="InterPro" id="IPR040982">
    <property type="entry name" value="DNA_pol3_finger"/>
</dbReference>
<dbReference type="InterPro" id="IPR004805">
    <property type="entry name" value="DnaE2/DnaE/PolC"/>
</dbReference>
<dbReference type="InterPro" id="IPR029460">
    <property type="entry name" value="DNAPol_HHH"/>
</dbReference>
<dbReference type="InterPro" id="IPR012340">
    <property type="entry name" value="NA-bd_OB-fold"/>
</dbReference>
<dbReference type="InterPro" id="IPR004365">
    <property type="entry name" value="NA-bd_OB_tRNA"/>
</dbReference>
<dbReference type="InterPro" id="IPR004013">
    <property type="entry name" value="PHP_dom"/>
</dbReference>
<dbReference type="InterPro" id="IPR003141">
    <property type="entry name" value="Pol/His_phosphatase_N"/>
</dbReference>
<dbReference type="InterPro" id="IPR016195">
    <property type="entry name" value="Pol/histidinol_Pase-like"/>
</dbReference>
<dbReference type="NCBIfam" id="TIGR00594">
    <property type="entry name" value="polc"/>
    <property type="match status" value="1"/>
</dbReference>
<dbReference type="NCBIfam" id="NF005582">
    <property type="entry name" value="PRK07279.1"/>
    <property type="match status" value="1"/>
</dbReference>
<dbReference type="PANTHER" id="PTHR32294">
    <property type="entry name" value="DNA POLYMERASE III SUBUNIT ALPHA"/>
    <property type="match status" value="1"/>
</dbReference>
<dbReference type="PANTHER" id="PTHR32294:SF0">
    <property type="entry name" value="DNA POLYMERASE III SUBUNIT ALPHA"/>
    <property type="match status" value="1"/>
</dbReference>
<dbReference type="Pfam" id="PF07733">
    <property type="entry name" value="DNA_pol3_alpha"/>
    <property type="match status" value="1"/>
</dbReference>
<dbReference type="Pfam" id="PF17657">
    <property type="entry name" value="DNA_pol3_finger"/>
    <property type="match status" value="1"/>
</dbReference>
<dbReference type="Pfam" id="PF14579">
    <property type="entry name" value="HHH_6"/>
    <property type="match status" value="1"/>
</dbReference>
<dbReference type="Pfam" id="PF02811">
    <property type="entry name" value="PHP"/>
    <property type="match status" value="1"/>
</dbReference>
<dbReference type="Pfam" id="PF01336">
    <property type="entry name" value="tRNA_anti-codon"/>
    <property type="match status" value="1"/>
</dbReference>
<dbReference type="SMART" id="SM00481">
    <property type="entry name" value="POLIIIAc"/>
    <property type="match status" value="1"/>
</dbReference>
<dbReference type="SUPFAM" id="SSF89550">
    <property type="entry name" value="PHP domain-like"/>
    <property type="match status" value="1"/>
</dbReference>
<protein>
    <recommendedName>
        <fullName>DNA polymerase III subunit alpha</fullName>
        <ecNumber>2.7.7.7</ecNumber>
    </recommendedName>
</protein>
<evidence type="ECO:0000250" key="1"/>
<evidence type="ECO:0000305" key="2"/>
<organism>
    <name type="scientific">Streptococcus pyogenes serotype M6 (strain ATCC BAA-946 / MGAS10394)</name>
    <dbReference type="NCBI Taxonomy" id="286636"/>
    <lineage>
        <taxon>Bacteria</taxon>
        <taxon>Bacillati</taxon>
        <taxon>Bacillota</taxon>
        <taxon>Bacilli</taxon>
        <taxon>Lactobacillales</taxon>
        <taxon>Streptococcaceae</taxon>
        <taxon>Streptococcus</taxon>
    </lineage>
</organism>
<keyword id="KW-0963">Cytoplasm</keyword>
<keyword id="KW-0235">DNA replication</keyword>
<keyword id="KW-0239">DNA-directed DNA polymerase</keyword>
<keyword id="KW-0548">Nucleotidyltransferase</keyword>
<keyword id="KW-0808">Transferase</keyword>
<comment type="function">
    <text evidence="1">DNA polymerase III is a complex, multichain enzyme responsible for most of the replicative synthesis in bacteria. This DNA polymerase also exhibits 3' to 5' exonuclease activity. The alpha chain is the DNA polymerase (By similarity).</text>
</comment>
<comment type="catalytic activity">
    <reaction>
        <text>DNA(n) + a 2'-deoxyribonucleoside 5'-triphosphate = DNA(n+1) + diphosphate</text>
        <dbReference type="Rhea" id="RHEA:22508"/>
        <dbReference type="Rhea" id="RHEA-COMP:17339"/>
        <dbReference type="Rhea" id="RHEA-COMP:17340"/>
        <dbReference type="ChEBI" id="CHEBI:33019"/>
        <dbReference type="ChEBI" id="CHEBI:61560"/>
        <dbReference type="ChEBI" id="CHEBI:173112"/>
        <dbReference type="EC" id="2.7.7.7"/>
    </reaction>
</comment>
<comment type="subunit">
    <text evidence="1">DNA polymerase III contains a core (composed of alpha, epsilon and theta chains) that associates with a tau subunit. This core dimerizes to form the PolIII' complex. PolIII' associates with the gamma complex (composed of gamma, delta, delta', psi and chi chains) and with the beta chain to form the complete DNA polymerase III complex (By similarity).</text>
</comment>
<comment type="subcellular location">
    <subcellularLocation>
        <location evidence="1">Cytoplasm</location>
    </subcellularLocation>
</comment>
<comment type="similarity">
    <text evidence="2">Belongs to the DNA polymerase type-C family. DnaE subfamily.</text>
</comment>
<proteinExistence type="inferred from homology"/>
<reference key="1">
    <citation type="journal article" date="2004" name="J. Infect. Dis.">
        <title>Progress toward characterization of the group A Streptococcus metagenome: complete genome sequence of a macrolide-resistant serotype M6 strain.</title>
        <authorList>
            <person name="Banks D.J."/>
            <person name="Porcella S.F."/>
            <person name="Barbian K.D."/>
            <person name="Beres S.B."/>
            <person name="Philips L.E."/>
            <person name="Voyich J.M."/>
            <person name="DeLeo F.R."/>
            <person name="Martin J.M."/>
            <person name="Somerville G.A."/>
            <person name="Musser J.M."/>
        </authorList>
    </citation>
    <scope>NUCLEOTIDE SEQUENCE [LARGE SCALE GENOMIC DNA]</scope>
    <source>
        <strain>ATCC BAA-946 / MGAS10394</strain>
    </source>
</reference>
<gene>
    <name type="primary">dnaE</name>
    <name type="ordered locus">M6_Spy0977</name>
</gene>